<evidence type="ECO:0000250" key="1">
    <source>
        <dbReference type="UniProtKB" id="P12998"/>
    </source>
</evidence>
<evidence type="ECO:0000269" key="2">
    <source>
    </source>
</evidence>
<evidence type="ECO:0000269" key="3">
    <source>
    </source>
</evidence>
<evidence type="ECO:0000303" key="4">
    <source>
    </source>
</evidence>
<evidence type="ECO:0000305" key="5"/>
<evidence type="ECO:0000312" key="6">
    <source>
        <dbReference type="EMBL" id="AAO66428.1"/>
    </source>
</evidence>
<feature type="chain" id="PRO_0000424866" description="Capreomycidine synthase">
    <location>
        <begin position="1"/>
        <end position="389"/>
    </location>
</feature>
<feature type="modified residue" description="N6-(pyridoxal phosphate)lysine" evidence="1">
    <location>
        <position position="230"/>
    </location>
</feature>
<accession>Q84CG1</accession>
<gene>
    <name evidence="4" type="primary">vioD</name>
    <name evidence="6" type="synonym">svaT</name>
</gene>
<dbReference type="EC" id="4.2.1.145" evidence="2 3"/>
<dbReference type="EMBL" id="AH012634">
    <property type="protein sequence ID" value="AAO66428.1"/>
    <property type="molecule type" value="Genomic_DNA"/>
</dbReference>
<dbReference type="EMBL" id="AY263398">
    <property type="protein sequence ID" value="AAP92494.1"/>
    <property type="molecule type" value="Genomic_DNA"/>
</dbReference>
<dbReference type="RefSeq" id="WP_051702360.1">
    <property type="nucleotide sequence ID" value="NZ_JNYP01000012.1"/>
</dbReference>
<dbReference type="SMR" id="Q84CG1"/>
<dbReference type="KEGG" id="ag:AAP92494"/>
<dbReference type="GO" id="GO:0016842">
    <property type="term" value="F:amidine-lyase activity"/>
    <property type="evidence" value="ECO:0000314"/>
    <property type="project" value="UniProtKB"/>
</dbReference>
<dbReference type="GO" id="GO:0030170">
    <property type="term" value="F:pyridoxal phosphate binding"/>
    <property type="evidence" value="ECO:0007669"/>
    <property type="project" value="InterPro"/>
</dbReference>
<dbReference type="GO" id="GO:0016740">
    <property type="term" value="F:transferase activity"/>
    <property type="evidence" value="ECO:0007669"/>
    <property type="project" value="InterPro"/>
</dbReference>
<dbReference type="GO" id="GO:0017000">
    <property type="term" value="P:antibiotic biosynthetic process"/>
    <property type="evidence" value="ECO:0000314"/>
    <property type="project" value="UniProtKB"/>
</dbReference>
<dbReference type="CDD" id="cd00609">
    <property type="entry name" value="AAT_like"/>
    <property type="match status" value="1"/>
</dbReference>
<dbReference type="FunFam" id="3.40.640.10:FF:000269">
    <property type="entry name" value="Capreomycidine synthase"/>
    <property type="match status" value="1"/>
</dbReference>
<dbReference type="Gene3D" id="3.90.1150.10">
    <property type="entry name" value="Aspartate Aminotransferase, domain 1"/>
    <property type="match status" value="1"/>
</dbReference>
<dbReference type="Gene3D" id="3.40.640.10">
    <property type="entry name" value="Type I PLP-dependent aspartate aminotransferase-like (Major domain)"/>
    <property type="match status" value="1"/>
</dbReference>
<dbReference type="InterPro" id="IPR001917">
    <property type="entry name" value="Aminotrans_II_pyridoxalP_BS"/>
</dbReference>
<dbReference type="InterPro" id="IPR004839">
    <property type="entry name" value="Aminotransferase_I/II_large"/>
</dbReference>
<dbReference type="InterPro" id="IPR023965">
    <property type="entry name" value="Capreomycidine_synthase"/>
</dbReference>
<dbReference type="InterPro" id="IPR015424">
    <property type="entry name" value="PyrdxlP-dep_Trfase"/>
</dbReference>
<dbReference type="InterPro" id="IPR015421">
    <property type="entry name" value="PyrdxlP-dep_Trfase_major"/>
</dbReference>
<dbReference type="InterPro" id="IPR015422">
    <property type="entry name" value="PyrdxlP-dep_Trfase_small"/>
</dbReference>
<dbReference type="NCBIfam" id="TIGR03947">
    <property type="entry name" value="viomycin_VioD"/>
    <property type="match status" value="1"/>
</dbReference>
<dbReference type="PANTHER" id="PTHR43510">
    <property type="entry name" value="AMINOTRANSFERASE FUNCTION, HYPOTHETICAL (EUROFUNG)"/>
    <property type="match status" value="1"/>
</dbReference>
<dbReference type="PANTHER" id="PTHR43510:SF1">
    <property type="entry name" value="AMINOTRANSFERASE FUNCTION, HYPOTHETICAL (EUROFUNG)"/>
    <property type="match status" value="1"/>
</dbReference>
<dbReference type="Pfam" id="PF00155">
    <property type="entry name" value="Aminotran_1_2"/>
    <property type="match status" value="1"/>
</dbReference>
<dbReference type="SUPFAM" id="SSF53383">
    <property type="entry name" value="PLP-dependent transferases"/>
    <property type="match status" value="1"/>
</dbReference>
<dbReference type="PROSITE" id="PS00599">
    <property type="entry name" value="AA_TRANSFER_CLASS_2"/>
    <property type="match status" value="1"/>
</dbReference>
<name>CAMYS_STRVI</name>
<reference key="1">
    <citation type="journal article" date="2003" name="Antimicrob. Agents Chemother.">
        <title>Deciphering tuberactinomycin biosynthesis: isolation, sequencing, and annotation of the viomycin biosynthetic gene cluster.</title>
        <authorList>
            <person name="Thomas M.G."/>
            <person name="Chan Y.A."/>
            <person name="Ozanick S.G."/>
        </authorList>
    </citation>
    <scope>NUCLEOTIDE SEQUENCE [GENOMIC DNA]</scope>
    <source>
        <strain>ATCC 11861</strain>
    </source>
</reference>
<reference key="2">
    <citation type="journal article" date="2003" name="Gene">
        <title>Identification and cloning of genes encoding viomycin biosynthesis from Streptomyces vinaceus and evidence for involvement of a rare oxygenase.</title>
        <authorList>
            <person name="Yin X."/>
            <person name="O'Hare T."/>
            <person name="Gould S.J."/>
            <person name="Zabriskie T.M."/>
        </authorList>
    </citation>
    <scope>NUCLEOTIDE SEQUENCE [GENOMIC DNA]</scope>
    <source>
        <strain>ATCC 11861</strain>
    </source>
</reference>
<reference key="3">
    <citation type="journal article" date="2004" name="ChemBioChem">
        <title>Formation of the nonproteinogenic amino acid 2S,3R-capreomycidine by VioD from the viomycin biosynthesis pathway.</title>
        <authorList>
            <person name="Yin X."/>
            <person name="McPhail K.L."/>
            <person name="Kim K.J."/>
            <person name="Zabriskie T.M."/>
        </authorList>
    </citation>
    <scope>FUNCTION</scope>
    <scope>CATALYTIC ACTIVITY</scope>
    <scope>PATHWAY</scope>
    <source>
        <strain>ATCC 11861</strain>
    </source>
</reference>
<reference key="4">
    <citation type="journal article" date="2004" name="ChemBioChem">
        <title>Conversion of (2S)-arginine to (2S,3R)-capreomycidine by VioC and VioD from the viomycin biosynthetic pathway of Streptomyces sp. strain ATCC 11861.</title>
        <authorList>
            <person name="Ju J."/>
            <person name="Ozanick S.G."/>
            <person name="Shen B."/>
            <person name="Thomas M.G."/>
        </authorList>
    </citation>
    <scope>FUNCTION</scope>
    <scope>CATALYTIC ACTIVITY</scope>
    <scope>PATHWAY</scope>
    <source>
        <strain>ATCC 11861</strain>
    </source>
</reference>
<organism>
    <name type="scientific">Streptomyces vinaceus</name>
    <dbReference type="NCBI Taxonomy" id="1960"/>
    <lineage>
        <taxon>Bacteria</taxon>
        <taxon>Bacillati</taxon>
        <taxon>Actinomycetota</taxon>
        <taxon>Actinomycetes</taxon>
        <taxon>Kitasatosporales</taxon>
        <taxon>Streptomycetaceae</taxon>
        <taxon>Streptomyces</taxon>
    </lineage>
</organism>
<sequence length="389" mass="42049">MTGPLGAGPQALPAAPLEDWLRERYFQAKTDISSSGVHNYTFGELRALDPALLGTRELDQLMFRDGPSLGDERLRAAVAARVRPGPGHVVMTTHGSSEALYLAFAALVRPGDEVVVATPAYHSLSGLATAAGASLRPWPLRPENGFAPDLDDLRAVLSDRTRLVVVNFPHNPSGACVDPRGRTELLDLVANSQAVLLWDGAFTDLVHDHPPLAEPSQDLDRVLSFGTLSKAYGLPGLRVGWCVVPQDLVSELVRIRDYLTLSLSPLVERVAAVAVEHADALITPRLTEARHNRRRVLEWAAASEGAIDCPVPRGGVTAFPRFTAHTDVTDLCERLLARHGVLVVPGRVFGQADRMRIGFSCPRPELERGLAAISEELGTHARGRRRGTG</sequence>
<keyword id="KW-0045">Antibiotic biosynthesis</keyword>
<keyword id="KW-0456">Lyase</keyword>
<keyword id="KW-0663">Pyridoxal phosphate</keyword>
<protein>
    <recommendedName>
        <fullName>Capreomycidine synthase</fullName>
        <ecNumber evidence="2 3">4.2.1.145</ecNumber>
    </recommendedName>
    <alternativeName>
        <fullName>Viomycin biosynthesis protein C</fullName>
    </alternativeName>
</protein>
<proteinExistence type="evidence at protein level"/>
<comment type="function">
    <text evidence="2 3">Involved in the biosynthesis of capreomycidine, an unusual amino acid used by non-ribosomal peptide synthases (NRPS) to make the tuberactinomycin class of peptide antibiotic such as viomycin and capreomycin. Catalyzes the dehydration of the C3 hydroxyl of (3S)-hydroxy-(2S)-arginine and the intramolecular cyclization to yield (2S,3R)-capreomycidine.</text>
</comment>
<comment type="catalytic activity">
    <reaction evidence="2 3">
        <text>(2S,3S)-hydroxyarginine = (2S,3R)-capreomycidine + H2O</text>
        <dbReference type="Rhea" id="RHEA:38159"/>
        <dbReference type="ChEBI" id="CHEBI:15377"/>
        <dbReference type="ChEBI" id="CHEBI:73938"/>
        <dbReference type="ChEBI" id="CHEBI:75665"/>
        <dbReference type="EC" id="4.2.1.145"/>
    </reaction>
</comment>
<comment type="cofactor">
    <cofactor evidence="1">
        <name>pyridoxal 5'-phosphate</name>
        <dbReference type="ChEBI" id="CHEBI:597326"/>
    </cofactor>
</comment>
<comment type="pathway">
    <text evidence="2 3">Antibiotic biosynthesis.</text>
</comment>
<comment type="similarity">
    <text evidence="5">Belongs to the class-II pyridoxal-phosphate-dependent aminotransferase family.</text>
</comment>